<organism>
    <name type="scientific">Rattus norvegicus</name>
    <name type="common">Rat</name>
    <dbReference type="NCBI Taxonomy" id="10116"/>
    <lineage>
        <taxon>Eukaryota</taxon>
        <taxon>Metazoa</taxon>
        <taxon>Chordata</taxon>
        <taxon>Craniata</taxon>
        <taxon>Vertebrata</taxon>
        <taxon>Euteleostomi</taxon>
        <taxon>Mammalia</taxon>
        <taxon>Eutheria</taxon>
        <taxon>Euarchontoglires</taxon>
        <taxon>Glires</taxon>
        <taxon>Rodentia</taxon>
        <taxon>Myomorpha</taxon>
        <taxon>Muroidea</taxon>
        <taxon>Muridae</taxon>
        <taxon>Murinae</taxon>
        <taxon>Rattus</taxon>
    </lineage>
</organism>
<gene>
    <name type="primary">Rnase13</name>
</gene>
<protein>
    <recommendedName>
        <fullName>Probable inactive ribonuclease-like protein 13</fullName>
    </recommendedName>
</protein>
<accession>Q5GAL7</accession>
<keyword id="KW-1185">Reference proteome</keyword>
<keyword id="KW-0964">Secreted</keyword>
<keyword id="KW-0732">Signal</keyword>
<sequence>MASDAASLLVLQLVLQPTLVTGITIQTAIKNFRILHVDYPMVNYPKGFHGYCNGLMAYVRGKLQDWYCPKIHYVVHAPFESIQKFCKYSESFCEDYNEYCTLTQNSFPITVCTLDHKQAPTSCSYNSTLTNQRLYLLCSRKHDAEPIGVIGLY</sequence>
<reference key="1">
    <citation type="journal article" date="2005" name="Genomics">
        <title>The ribonuclease A superfamily of mammals and birds: identifying new members and tracing evolutionary histories.</title>
        <authorList>
            <person name="Cho S."/>
            <person name="Beintema J.J."/>
            <person name="Zhang J."/>
        </authorList>
    </citation>
    <scope>NUCLEOTIDE SEQUENCE [GENOMIC DNA]</scope>
    <source>
        <strain>Brown Norway</strain>
    </source>
</reference>
<proteinExistence type="inferred from homology"/>
<evidence type="ECO:0000255" key="1"/>
<evidence type="ECO:0000305" key="2"/>
<dbReference type="EMBL" id="AY665836">
    <property type="protein sequence ID" value="AAV87202.1"/>
    <property type="molecule type" value="Genomic_DNA"/>
</dbReference>
<dbReference type="RefSeq" id="NP_001012231.1">
    <property type="nucleotide sequence ID" value="NM_001012231.1"/>
</dbReference>
<dbReference type="SMR" id="Q5GAL7"/>
<dbReference type="FunCoup" id="Q5GAL7">
    <property type="interactions" value="1"/>
</dbReference>
<dbReference type="STRING" id="10116.ENSRNOP00000057279"/>
<dbReference type="PhosphoSitePlus" id="Q5GAL7"/>
<dbReference type="PaxDb" id="10116-ENSRNOP00000057279"/>
<dbReference type="GeneID" id="497194"/>
<dbReference type="KEGG" id="rno:497194"/>
<dbReference type="UCSC" id="RGD:1359386">
    <property type="organism name" value="rat"/>
</dbReference>
<dbReference type="AGR" id="RGD:1359386"/>
<dbReference type="CTD" id="440163"/>
<dbReference type="RGD" id="1359386">
    <property type="gene designation" value="Rnase13"/>
</dbReference>
<dbReference type="eggNOG" id="ENOG502SRBA">
    <property type="taxonomic scope" value="Eukaryota"/>
</dbReference>
<dbReference type="InParanoid" id="Q5GAL7"/>
<dbReference type="OrthoDB" id="9445850at2759"/>
<dbReference type="PhylomeDB" id="Q5GAL7"/>
<dbReference type="TreeFam" id="TF343810"/>
<dbReference type="PRO" id="PR:Q5GAL7"/>
<dbReference type="Proteomes" id="UP000002494">
    <property type="component" value="Unplaced"/>
</dbReference>
<dbReference type="GO" id="GO:0005576">
    <property type="term" value="C:extracellular region"/>
    <property type="evidence" value="ECO:0007669"/>
    <property type="project" value="UniProtKB-SubCell"/>
</dbReference>
<dbReference type="GO" id="GO:0003676">
    <property type="term" value="F:nucleic acid binding"/>
    <property type="evidence" value="ECO:0007669"/>
    <property type="project" value="InterPro"/>
</dbReference>
<dbReference type="GO" id="GO:0050830">
    <property type="term" value="P:defense response to Gram-positive bacterium"/>
    <property type="evidence" value="ECO:0000318"/>
    <property type="project" value="GO_Central"/>
</dbReference>
<dbReference type="CDD" id="cd00163">
    <property type="entry name" value="RNase_A"/>
    <property type="match status" value="1"/>
</dbReference>
<dbReference type="Gene3D" id="3.10.130.10">
    <property type="entry name" value="Ribonuclease A-like domain"/>
    <property type="match status" value="1"/>
</dbReference>
<dbReference type="InterPro" id="IPR001427">
    <property type="entry name" value="RNaseA"/>
</dbReference>
<dbReference type="InterPro" id="IPR036816">
    <property type="entry name" value="RNaseA-like_dom_sf"/>
</dbReference>
<dbReference type="InterPro" id="IPR023412">
    <property type="entry name" value="RNaseA_domain"/>
</dbReference>
<dbReference type="PANTHER" id="PTHR11437:SF11">
    <property type="entry name" value="INACTIVE RIBONUCLEASE-LIKE PROTEIN 13-RELATED"/>
    <property type="match status" value="1"/>
</dbReference>
<dbReference type="PANTHER" id="PTHR11437">
    <property type="entry name" value="RIBONUCLEASE"/>
    <property type="match status" value="1"/>
</dbReference>
<dbReference type="Pfam" id="PF00074">
    <property type="entry name" value="RnaseA"/>
    <property type="match status" value="1"/>
</dbReference>
<dbReference type="SMART" id="SM00092">
    <property type="entry name" value="RNAse_Pc"/>
    <property type="match status" value="1"/>
</dbReference>
<dbReference type="SUPFAM" id="SSF54076">
    <property type="entry name" value="RNase A-like"/>
    <property type="match status" value="1"/>
</dbReference>
<comment type="function">
    <text evidence="2">Does not exhibit any ribonuclease activity.</text>
</comment>
<comment type="subcellular location">
    <subcellularLocation>
        <location evidence="2">Secreted</location>
    </subcellularLocation>
</comment>
<comment type="similarity">
    <text evidence="2">Belongs to the pancreatic ribonuclease family.</text>
</comment>
<name>RNS13_RAT</name>
<feature type="signal peptide" evidence="1">
    <location>
        <begin position="1"/>
        <end position="22"/>
    </location>
</feature>
<feature type="chain" id="PRO_0000308707" description="Probable inactive ribonuclease-like protein 13">
    <location>
        <begin position="23"/>
        <end position="153"/>
    </location>
</feature>